<sequence length="641" mass="69084">MGRIIGIDLGTTNSCVAVLDGDKARVIENAEGDRTTPSIIAYTADETLVGQPAKRQAVTNPTNTVFAIKRLIGRRFKDDEVQRDVDIMPFKIIGADNGDAWVEAQGKKMAPPQISAEILKKMKKTAEDYLGEEVTEAVITVPAYFNDSQRQATKDAGRIAGLEVKRIINEPTAAALAYGIDKKQGDNIVAVYDLGGGTFDISIIEIDSVDGEQTFEVLATNGDTHLGGEDFDNRLINYLADEFKKEQSLDLRNDPLAMQRLKEAAEKAKIELSSTTQTEVNLPYITADATGPKHLVVKITRAKLESLVEDLITRSLEPLKVALADADLSVSDINEVILVGGQTRMPKVREEVSSFFGKELRQDVNPDEAVAIGAAVQAGVLSGDVKDVLLLDVTPLSLGIETMGSVMTKLIEKNTTIPTKASQTFSTADDNQAAVTIHVLQGERKQSSGNKSLGQFNLEGIEPAPRGMPQIEVAFDIDADGILHVSATDKKTGKAQNITIKASSGLSDEEVEAMVRDAEAHADEDAKFEELVTARNQADGMVHATKKQIEEAGEELPADEKEKIEAAMANVDTATKGSDKEAIEKATQELMEASSKLMEIAQAKAQAQQGQPEGAGEAQQDAHAADDVVDAEFEEVKDDKK</sequence>
<gene>
    <name evidence="1" type="primary">dnaK</name>
    <name type="ordered locus">swp_1196</name>
</gene>
<proteinExistence type="inferred from homology"/>
<accession>B8CKF3</accession>
<evidence type="ECO:0000255" key="1">
    <source>
        <dbReference type="HAMAP-Rule" id="MF_00332"/>
    </source>
</evidence>
<evidence type="ECO:0000256" key="2">
    <source>
        <dbReference type="SAM" id="MobiDB-lite"/>
    </source>
</evidence>
<organism>
    <name type="scientific">Shewanella piezotolerans (strain WP3 / JCM 13877)</name>
    <dbReference type="NCBI Taxonomy" id="225849"/>
    <lineage>
        <taxon>Bacteria</taxon>
        <taxon>Pseudomonadati</taxon>
        <taxon>Pseudomonadota</taxon>
        <taxon>Gammaproteobacteria</taxon>
        <taxon>Alteromonadales</taxon>
        <taxon>Shewanellaceae</taxon>
        <taxon>Shewanella</taxon>
    </lineage>
</organism>
<protein>
    <recommendedName>
        <fullName evidence="1">Chaperone protein DnaK</fullName>
    </recommendedName>
    <alternativeName>
        <fullName evidence="1">HSP70</fullName>
    </alternativeName>
    <alternativeName>
        <fullName evidence="1">Heat shock 70 kDa protein</fullName>
    </alternativeName>
    <alternativeName>
        <fullName evidence="1">Heat shock protein 70</fullName>
    </alternativeName>
</protein>
<dbReference type="EMBL" id="CP000472">
    <property type="protein sequence ID" value="ACJ27992.1"/>
    <property type="molecule type" value="Genomic_DNA"/>
</dbReference>
<dbReference type="RefSeq" id="WP_020911370.1">
    <property type="nucleotide sequence ID" value="NC_011566.1"/>
</dbReference>
<dbReference type="SMR" id="B8CKF3"/>
<dbReference type="STRING" id="225849.swp_1196"/>
<dbReference type="KEGG" id="swp:swp_1196"/>
<dbReference type="eggNOG" id="COG0443">
    <property type="taxonomic scope" value="Bacteria"/>
</dbReference>
<dbReference type="HOGENOM" id="CLU_005965_2_1_6"/>
<dbReference type="OrthoDB" id="9766019at2"/>
<dbReference type="Proteomes" id="UP000000753">
    <property type="component" value="Chromosome"/>
</dbReference>
<dbReference type="GO" id="GO:0005524">
    <property type="term" value="F:ATP binding"/>
    <property type="evidence" value="ECO:0007669"/>
    <property type="project" value="UniProtKB-UniRule"/>
</dbReference>
<dbReference type="GO" id="GO:0140662">
    <property type="term" value="F:ATP-dependent protein folding chaperone"/>
    <property type="evidence" value="ECO:0007669"/>
    <property type="project" value="InterPro"/>
</dbReference>
<dbReference type="GO" id="GO:0051082">
    <property type="term" value="F:unfolded protein binding"/>
    <property type="evidence" value="ECO:0007669"/>
    <property type="project" value="InterPro"/>
</dbReference>
<dbReference type="CDD" id="cd10234">
    <property type="entry name" value="ASKHA_NBD_HSP70_DnaK-like"/>
    <property type="match status" value="1"/>
</dbReference>
<dbReference type="FunFam" id="2.60.34.10:FF:000014">
    <property type="entry name" value="Chaperone protein DnaK HSP70"/>
    <property type="match status" value="1"/>
</dbReference>
<dbReference type="FunFam" id="3.30.30.30:FF:000003">
    <property type="entry name" value="Heat shock protein 9"/>
    <property type="match status" value="1"/>
</dbReference>
<dbReference type="FunFam" id="1.20.1270.10:FF:000001">
    <property type="entry name" value="Molecular chaperone DnaK"/>
    <property type="match status" value="1"/>
</dbReference>
<dbReference type="FunFam" id="3.30.420.40:FF:000004">
    <property type="entry name" value="Molecular chaperone DnaK"/>
    <property type="match status" value="1"/>
</dbReference>
<dbReference type="FunFam" id="3.90.640.10:FF:000003">
    <property type="entry name" value="Molecular chaperone DnaK"/>
    <property type="match status" value="1"/>
</dbReference>
<dbReference type="Gene3D" id="1.20.1270.10">
    <property type="match status" value="1"/>
</dbReference>
<dbReference type="Gene3D" id="3.30.420.40">
    <property type="match status" value="2"/>
</dbReference>
<dbReference type="Gene3D" id="3.90.640.10">
    <property type="entry name" value="Actin, Chain A, domain 4"/>
    <property type="match status" value="1"/>
</dbReference>
<dbReference type="Gene3D" id="2.60.34.10">
    <property type="entry name" value="Substrate Binding Domain Of DNAk, Chain A, domain 1"/>
    <property type="match status" value="1"/>
</dbReference>
<dbReference type="HAMAP" id="MF_00332">
    <property type="entry name" value="DnaK"/>
    <property type="match status" value="1"/>
</dbReference>
<dbReference type="InterPro" id="IPR043129">
    <property type="entry name" value="ATPase_NBD"/>
</dbReference>
<dbReference type="InterPro" id="IPR012725">
    <property type="entry name" value="Chaperone_DnaK"/>
</dbReference>
<dbReference type="InterPro" id="IPR018181">
    <property type="entry name" value="Heat_shock_70_CS"/>
</dbReference>
<dbReference type="InterPro" id="IPR029048">
    <property type="entry name" value="HSP70_C_sf"/>
</dbReference>
<dbReference type="InterPro" id="IPR029047">
    <property type="entry name" value="HSP70_peptide-bd_sf"/>
</dbReference>
<dbReference type="InterPro" id="IPR013126">
    <property type="entry name" value="Hsp_70_fam"/>
</dbReference>
<dbReference type="NCBIfam" id="NF001413">
    <property type="entry name" value="PRK00290.1"/>
    <property type="match status" value="1"/>
</dbReference>
<dbReference type="NCBIfam" id="TIGR02350">
    <property type="entry name" value="prok_dnaK"/>
    <property type="match status" value="1"/>
</dbReference>
<dbReference type="PANTHER" id="PTHR19375">
    <property type="entry name" value="HEAT SHOCK PROTEIN 70KDA"/>
    <property type="match status" value="1"/>
</dbReference>
<dbReference type="Pfam" id="PF00012">
    <property type="entry name" value="HSP70"/>
    <property type="match status" value="1"/>
</dbReference>
<dbReference type="PRINTS" id="PR00301">
    <property type="entry name" value="HEATSHOCK70"/>
</dbReference>
<dbReference type="SUPFAM" id="SSF53067">
    <property type="entry name" value="Actin-like ATPase domain"/>
    <property type="match status" value="2"/>
</dbReference>
<dbReference type="SUPFAM" id="SSF100920">
    <property type="entry name" value="Heat shock protein 70kD (HSP70), peptide-binding domain"/>
    <property type="match status" value="1"/>
</dbReference>
<dbReference type="PROSITE" id="PS00297">
    <property type="entry name" value="HSP70_1"/>
    <property type="match status" value="1"/>
</dbReference>
<dbReference type="PROSITE" id="PS00329">
    <property type="entry name" value="HSP70_2"/>
    <property type="match status" value="1"/>
</dbReference>
<dbReference type="PROSITE" id="PS01036">
    <property type="entry name" value="HSP70_3"/>
    <property type="match status" value="1"/>
</dbReference>
<keyword id="KW-0067">ATP-binding</keyword>
<keyword id="KW-0143">Chaperone</keyword>
<keyword id="KW-0547">Nucleotide-binding</keyword>
<keyword id="KW-0597">Phosphoprotein</keyword>
<keyword id="KW-0346">Stress response</keyword>
<feature type="chain" id="PRO_1000119757" description="Chaperone protein DnaK">
    <location>
        <begin position="1"/>
        <end position="641"/>
    </location>
</feature>
<feature type="region of interest" description="Disordered" evidence="2">
    <location>
        <begin position="601"/>
        <end position="641"/>
    </location>
</feature>
<feature type="compositionally biased region" description="Low complexity" evidence="2">
    <location>
        <begin position="601"/>
        <end position="622"/>
    </location>
</feature>
<feature type="compositionally biased region" description="Acidic residues" evidence="2">
    <location>
        <begin position="627"/>
        <end position="641"/>
    </location>
</feature>
<feature type="modified residue" description="Phosphothreonine; by autocatalysis" evidence="1">
    <location>
        <position position="198"/>
    </location>
</feature>
<name>DNAK_SHEPW</name>
<comment type="function">
    <text evidence="1">Acts as a chaperone.</text>
</comment>
<comment type="induction">
    <text evidence="1">By stress conditions e.g. heat shock.</text>
</comment>
<comment type="similarity">
    <text evidence="1">Belongs to the heat shock protein 70 family.</text>
</comment>
<reference key="1">
    <citation type="journal article" date="2008" name="PLoS ONE">
        <title>Environmental adaptation: genomic analysis of the piezotolerant and psychrotolerant deep-sea iron reducing bacterium Shewanella piezotolerans WP3.</title>
        <authorList>
            <person name="Wang F."/>
            <person name="Wang J."/>
            <person name="Jian H."/>
            <person name="Zhang B."/>
            <person name="Li S."/>
            <person name="Wang F."/>
            <person name="Zeng X."/>
            <person name="Gao L."/>
            <person name="Bartlett D.H."/>
            <person name="Yu J."/>
            <person name="Hu S."/>
            <person name="Xiao X."/>
        </authorList>
    </citation>
    <scope>NUCLEOTIDE SEQUENCE [LARGE SCALE GENOMIC DNA]</scope>
    <source>
        <strain>WP3 / JCM 13877</strain>
    </source>
</reference>